<feature type="chain" id="PRO_0000157195" description="Putative septation protein SpoVG">
    <location>
        <begin position="1"/>
        <end position="93"/>
    </location>
</feature>
<reference key="1">
    <citation type="journal article" date="2002" name="J. Bacteriol.">
        <title>Genome sequence and analysis of the oral bacterium Fusobacterium nucleatum strain ATCC 25586.</title>
        <authorList>
            <person name="Kapatral V."/>
            <person name="Anderson I."/>
            <person name="Ivanova N."/>
            <person name="Reznik G."/>
            <person name="Los T."/>
            <person name="Lykidis A."/>
            <person name="Bhattacharyya A."/>
            <person name="Bartman A."/>
            <person name="Gardner W."/>
            <person name="Grechkin G."/>
            <person name="Zhu L."/>
            <person name="Vasieva O."/>
            <person name="Chu L."/>
            <person name="Kogan Y."/>
            <person name="Chaga O."/>
            <person name="Goltsman E."/>
            <person name="Bernal A."/>
            <person name="Larsen N."/>
            <person name="D'Souza M."/>
            <person name="Walunas T."/>
            <person name="Pusch G."/>
            <person name="Haselkorn R."/>
            <person name="Fonstein M."/>
            <person name="Kyrpides N.C."/>
            <person name="Overbeek R."/>
        </authorList>
    </citation>
    <scope>NUCLEOTIDE SEQUENCE [LARGE SCALE GENOMIC DNA]</scope>
    <source>
        <strain>ATCC 25586 / DSM 15643 / BCRC 10681 / CIP 101130 / JCM 8532 / KCTC 2640 / LMG 13131 / VPI 4355</strain>
    </source>
</reference>
<proteinExistence type="inferred from homology"/>
<dbReference type="EMBL" id="AE009951">
    <property type="protein sequence ID" value="AAL94235.1"/>
    <property type="molecule type" value="Genomic_DNA"/>
</dbReference>
<dbReference type="RefSeq" id="NP_602936.1">
    <property type="nucleotide sequence ID" value="NC_003454.1"/>
</dbReference>
<dbReference type="RefSeq" id="WP_011016082.1">
    <property type="nucleotide sequence ID" value="NZ_OZ209243.1"/>
</dbReference>
<dbReference type="SMR" id="Q8RH88"/>
<dbReference type="FunCoup" id="Q8RH88">
    <property type="interactions" value="26"/>
</dbReference>
<dbReference type="STRING" id="190304.FN0022"/>
<dbReference type="PaxDb" id="190304-FN0022"/>
<dbReference type="EnsemblBacteria" id="AAL94235">
    <property type="protein sequence ID" value="AAL94235"/>
    <property type="gene ID" value="FN0022"/>
</dbReference>
<dbReference type="KEGG" id="fnu:FN0022"/>
<dbReference type="PATRIC" id="fig|190304.8.peg.615"/>
<dbReference type="eggNOG" id="COG2088">
    <property type="taxonomic scope" value="Bacteria"/>
</dbReference>
<dbReference type="HOGENOM" id="CLU_103669_2_1_0"/>
<dbReference type="InParanoid" id="Q8RH88"/>
<dbReference type="BioCyc" id="FNUC190304:G1FZS-635-MONOMER"/>
<dbReference type="Proteomes" id="UP000002521">
    <property type="component" value="Chromosome"/>
</dbReference>
<dbReference type="GO" id="GO:0000917">
    <property type="term" value="P:division septum assembly"/>
    <property type="evidence" value="ECO:0007669"/>
    <property type="project" value="UniProtKB-KW"/>
</dbReference>
<dbReference type="GO" id="GO:0030435">
    <property type="term" value="P:sporulation resulting in formation of a cellular spore"/>
    <property type="evidence" value="ECO:0007669"/>
    <property type="project" value="InterPro"/>
</dbReference>
<dbReference type="Gene3D" id="3.30.1120.40">
    <property type="entry name" value="Stage V sporulation protein G"/>
    <property type="match status" value="1"/>
</dbReference>
<dbReference type="HAMAP" id="MF_00819">
    <property type="entry name" value="SpoVG"/>
    <property type="match status" value="1"/>
</dbReference>
<dbReference type="InterPro" id="IPR007170">
    <property type="entry name" value="SpoVG"/>
</dbReference>
<dbReference type="InterPro" id="IPR036751">
    <property type="entry name" value="SpoVG_sf"/>
</dbReference>
<dbReference type="PANTHER" id="PTHR38429">
    <property type="entry name" value="SEPTATION PROTEIN SPOVG-RELATED"/>
    <property type="match status" value="1"/>
</dbReference>
<dbReference type="PANTHER" id="PTHR38429:SF1">
    <property type="entry name" value="SEPTATION PROTEIN SPOVG-RELATED"/>
    <property type="match status" value="1"/>
</dbReference>
<dbReference type="Pfam" id="PF04026">
    <property type="entry name" value="SpoVG"/>
    <property type="match status" value="1"/>
</dbReference>
<dbReference type="SUPFAM" id="SSF160537">
    <property type="entry name" value="SpoVG-like"/>
    <property type="match status" value="1"/>
</dbReference>
<organism>
    <name type="scientific">Fusobacterium nucleatum subsp. nucleatum (strain ATCC 25586 / DSM 15643 / BCRC 10681 / CIP 101130 / JCM 8532 / KCTC 2640 / LMG 13131 / VPI 4355)</name>
    <dbReference type="NCBI Taxonomy" id="190304"/>
    <lineage>
        <taxon>Bacteria</taxon>
        <taxon>Fusobacteriati</taxon>
        <taxon>Fusobacteriota</taxon>
        <taxon>Fusobacteriia</taxon>
        <taxon>Fusobacteriales</taxon>
        <taxon>Fusobacteriaceae</taxon>
        <taxon>Fusobacterium</taxon>
    </lineage>
</organism>
<comment type="function">
    <text evidence="1">Could be involved in septation.</text>
</comment>
<comment type="similarity">
    <text evidence="1">Belongs to the SpoVG family.</text>
</comment>
<name>SP5G_FUSNN</name>
<gene>
    <name evidence="1" type="primary">spoVG</name>
    <name type="ordered locus">FN0022</name>
</gene>
<accession>Q8RH88</accession>
<protein>
    <recommendedName>
        <fullName evidence="1">Putative septation protein SpoVG</fullName>
    </recommendedName>
</protein>
<evidence type="ECO:0000255" key="1">
    <source>
        <dbReference type="HAMAP-Rule" id="MF_00819"/>
    </source>
</evidence>
<keyword id="KW-0131">Cell cycle</keyword>
<keyword id="KW-0132">Cell division</keyword>
<keyword id="KW-1185">Reference proteome</keyword>
<keyword id="KW-0717">Septation</keyword>
<sequence length="93" mass="10811">MKVTNVKIKKVDGDKFDRLRAYVDVTLDDCLVIHGLKLMQGEQGMFVAMPSRKMRNEEFKDIVHPICPELRNDITKVVQEKYFALDQEQEAVI</sequence>